<evidence type="ECO:0000255" key="1">
    <source>
        <dbReference type="HAMAP-Rule" id="MF_00671"/>
    </source>
</evidence>
<protein>
    <recommendedName>
        <fullName evidence="1">Tol-Pal system protein TolB</fullName>
    </recommendedName>
</protein>
<name>TOLB_PARP8</name>
<organism>
    <name type="scientific">Paraburkholderia phymatum (strain DSM 17167 / CIP 108236 / LMG 21445 / STM815)</name>
    <name type="common">Burkholderia phymatum</name>
    <dbReference type="NCBI Taxonomy" id="391038"/>
    <lineage>
        <taxon>Bacteria</taxon>
        <taxon>Pseudomonadati</taxon>
        <taxon>Pseudomonadota</taxon>
        <taxon>Betaproteobacteria</taxon>
        <taxon>Burkholderiales</taxon>
        <taxon>Burkholderiaceae</taxon>
        <taxon>Paraburkholderia</taxon>
    </lineage>
</organism>
<proteinExistence type="inferred from homology"/>
<gene>
    <name evidence="1" type="primary">tolB</name>
    <name type="ordered locus">Bphy_2455</name>
</gene>
<keyword id="KW-0131">Cell cycle</keyword>
<keyword id="KW-0132">Cell division</keyword>
<keyword id="KW-0574">Periplasm</keyword>
<keyword id="KW-1185">Reference proteome</keyword>
<keyword id="KW-0732">Signal</keyword>
<accession>B2JGA0</accession>
<comment type="function">
    <text evidence="1">Part of the Tol-Pal system, which plays a role in outer membrane invagination during cell division and is important for maintaining outer membrane integrity.</text>
</comment>
<comment type="subunit">
    <text evidence="1">The Tol-Pal system is composed of five core proteins: the inner membrane proteins TolA, TolQ and TolR, the periplasmic protein TolB and the outer membrane protein Pal. They form a network linking the inner and outer membranes and the peptidoglycan layer.</text>
</comment>
<comment type="subcellular location">
    <subcellularLocation>
        <location evidence="1">Periplasm</location>
    </subcellularLocation>
</comment>
<comment type="similarity">
    <text evidence="1">Belongs to the TolB family.</text>
</comment>
<dbReference type="EMBL" id="CP001043">
    <property type="protein sequence ID" value="ACC71628.1"/>
    <property type="molecule type" value="Genomic_DNA"/>
</dbReference>
<dbReference type="RefSeq" id="WP_012401832.1">
    <property type="nucleotide sequence ID" value="NC_010622.1"/>
</dbReference>
<dbReference type="SMR" id="B2JGA0"/>
<dbReference type="STRING" id="391038.Bphy_2455"/>
<dbReference type="KEGG" id="bph:Bphy_2455"/>
<dbReference type="eggNOG" id="COG0823">
    <property type="taxonomic scope" value="Bacteria"/>
</dbReference>
<dbReference type="HOGENOM" id="CLU_047123_0_0_4"/>
<dbReference type="OrthoDB" id="9802240at2"/>
<dbReference type="Proteomes" id="UP000001192">
    <property type="component" value="Chromosome 1"/>
</dbReference>
<dbReference type="GO" id="GO:0042597">
    <property type="term" value="C:periplasmic space"/>
    <property type="evidence" value="ECO:0007669"/>
    <property type="project" value="UniProtKB-SubCell"/>
</dbReference>
<dbReference type="GO" id="GO:0051301">
    <property type="term" value="P:cell division"/>
    <property type="evidence" value="ECO:0007669"/>
    <property type="project" value="UniProtKB-UniRule"/>
</dbReference>
<dbReference type="GO" id="GO:0017038">
    <property type="term" value="P:protein import"/>
    <property type="evidence" value="ECO:0007669"/>
    <property type="project" value="InterPro"/>
</dbReference>
<dbReference type="Gene3D" id="2.120.10.30">
    <property type="entry name" value="TolB, C-terminal domain"/>
    <property type="match status" value="1"/>
</dbReference>
<dbReference type="Gene3D" id="3.40.50.10070">
    <property type="entry name" value="TolB, N-terminal domain"/>
    <property type="match status" value="1"/>
</dbReference>
<dbReference type="HAMAP" id="MF_00671">
    <property type="entry name" value="TolB"/>
    <property type="match status" value="1"/>
</dbReference>
<dbReference type="InterPro" id="IPR011042">
    <property type="entry name" value="6-blade_b-propeller_TolB-like"/>
</dbReference>
<dbReference type="InterPro" id="IPR011659">
    <property type="entry name" value="PD40"/>
</dbReference>
<dbReference type="InterPro" id="IPR014167">
    <property type="entry name" value="Tol-Pal_TolB"/>
</dbReference>
<dbReference type="InterPro" id="IPR007195">
    <property type="entry name" value="TolB_N"/>
</dbReference>
<dbReference type="NCBIfam" id="TIGR02800">
    <property type="entry name" value="propeller_TolB"/>
    <property type="match status" value="1"/>
</dbReference>
<dbReference type="PANTHER" id="PTHR36842:SF1">
    <property type="entry name" value="PROTEIN TOLB"/>
    <property type="match status" value="1"/>
</dbReference>
<dbReference type="PANTHER" id="PTHR36842">
    <property type="entry name" value="PROTEIN TOLB HOMOLOG"/>
    <property type="match status" value="1"/>
</dbReference>
<dbReference type="Pfam" id="PF07676">
    <property type="entry name" value="PD40"/>
    <property type="match status" value="5"/>
</dbReference>
<dbReference type="Pfam" id="PF04052">
    <property type="entry name" value="TolB_N"/>
    <property type="match status" value="1"/>
</dbReference>
<dbReference type="SUPFAM" id="SSF52964">
    <property type="entry name" value="TolB, N-terminal domain"/>
    <property type="match status" value="1"/>
</dbReference>
<dbReference type="SUPFAM" id="SSF69304">
    <property type="entry name" value="Tricorn protease N-terminal domain"/>
    <property type="match status" value="1"/>
</dbReference>
<reference key="1">
    <citation type="journal article" date="2014" name="Stand. Genomic Sci.">
        <title>Complete genome sequence of Burkholderia phymatum STM815(T), a broad host range and efficient nitrogen-fixing symbiont of Mimosa species.</title>
        <authorList>
            <person name="Moulin L."/>
            <person name="Klonowska A."/>
            <person name="Caroline B."/>
            <person name="Booth K."/>
            <person name="Vriezen J.A."/>
            <person name="Melkonian R."/>
            <person name="James E.K."/>
            <person name="Young J.P."/>
            <person name="Bena G."/>
            <person name="Hauser L."/>
            <person name="Land M."/>
            <person name="Kyrpides N."/>
            <person name="Bruce D."/>
            <person name="Chain P."/>
            <person name="Copeland A."/>
            <person name="Pitluck S."/>
            <person name="Woyke T."/>
            <person name="Lizotte-Waniewski M."/>
            <person name="Bristow J."/>
            <person name="Riley M."/>
        </authorList>
    </citation>
    <scope>NUCLEOTIDE SEQUENCE [LARGE SCALE GENOMIC DNA]</scope>
    <source>
        <strain>DSM 17167 / CIP 108236 / LMG 21445 / STM815</strain>
    </source>
</reference>
<sequence length="430" mass="45467">MSLMTKLGLRALVASCLIAAGGAAHAQLNVLVTGVGSTQFPIATANFANEANSPQQISTIVRQDLQRSGKFTNIDAGSAPVSEGDSVDLGAWKAKGANAFVAGSVTKLPNGQYQVRFKLYDTVNQQSLGGLELVSPEGGLRMSAHKVADYIYAKLMGGRGVFATRLSYVIKTGNRYQLQISDSDGQDAHIALSSPEPIISPAWSPDGTKVAYVSFEKKKPIVYIHDLPTGRRVVVSDQKGNNSAPAWSPDGRTLAVALSRTGNTQIFAVNADGSGLRRLTQGSSIDTEPSYSPDGQSIYFTSDRGGQPQIYKMPASGEASGGAQRVTFTGNYNTSPRVSPDGKQLAYISRTGGGFKLYIQDLQSGVATALTDTTHDESPSFAANGQYILYATQVNGRGVLAAVSTDGRTRQVLSVQGGSVREPSWGPFMQ</sequence>
<feature type="signal peptide" evidence="1">
    <location>
        <begin position="1"/>
        <end position="26"/>
    </location>
</feature>
<feature type="chain" id="PRO_5000344235" description="Tol-Pal system protein TolB" evidence="1">
    <location>
        <begin position="27"/>
        <end position="430"/>
    </location>
</feature>